<protein>
    <recommendedName>
        <fullName>Dual specificity protein kinase CLK4</fullName>
        <ecNumber>2.7.12.1</ecNumber>
    </recommendedName>
    <alternativeName>
        <fullName>CDC-like kinase 4</fullName>
    </alternativeName>
</protein>
<evidence type="ECO:0000250" key="1"/>
<evidence type="ECO:0000250" key="2">
    <source>
        <dbReference type="UniProtKB" id="Q9HAZ1"/>
    </source>
</evidence>
<evidence type="ECO:0000255" key="3">
    <source>
        <dbReference type="PROSITE-ProRule" id="PRU00159"/>
    </source>
</evidence>
<evidence type="ECO:0000255" key="4">
    <source>
        <dbReference type="PROSITE-ProRule" id="PRU10027"/>
    </source>
</evidence>
<evidence type="ECO:0000256" key="5">
    <source>
        <dbReference type="SAM" id="MobiDB-lite"/>
    </source>
</evidence>
<evidence type="ECO:0000269" key="6">
    <source>
    </source>
</evidence>
<evidence type="ECO:0000269" key="7">
    <source>
    </source>
</evidence>
<evidence type="ECO:0000269" key="8">
    <source>
    </source>
</evidence>
<evidence type="ECO:0000269" key="9">
    <source>
    </source>
</evidence>
<evidence type="ECO:0000303" key="10">
    <source>
    </source>
</evidence>
<evidence type="ECO:0000303" key="11">
    <source>
    </source>
</evidence>
<evidence type="ECO:0000305" key="12"/>
<evidence type="ECO:0007744" key="13">
    <source>
    </source>
</evidence>
<evidence type="ECO:0007744" key="14">
    <source>
    </source>
</evidence>
<feature type="chain" id="PRO_0000085874" description="Dual specificity protein kinase CLK4">
    <location>
        <begin position="1"/>
        <end position="481"/>
    </location>
</feature>
<feature type="domain" description="Protein kinase" evidence="3">
    <location>
        <begin position="159"/>
        <end position="475"/>
    </location>
</feature>
<feature type="region of interest" description="Disordered" evidence="5">
    <location>
        <begin position="1"/>
        <end position="47"/>
    </location>
</feature>
<feature type="region of interest" description="Disordered" evidence="5">
    <location>
        <begin position="102"/>
        <end position="143"/>
    </location>
</feature>
<feature type="compositionally biased region" description="Basic and acidic residues" evidence="5">
    <location>
        <begin position="8"/>
        <end position="19"/>
    </location>
</feature>
<feature type="compositionally biased region" description="Basic residues" evidence="5">
    <location>
        <begin position="106"/>
        <end position="119"/>
    </location>
</feature>
<feature type="compositionally biased region" description="Basic residues" evidence="5">
    <location>
        <begin position="126"/>
        <end position="136"/>
    </location>
</feature>
<feature type="active site" description="Proton acceptor" evidence="3 4">
    <location>
        <position position="286"/>
    </location>
</feature>
<feature type="binding site" evidence="3">
    <location>
        <begin position="165"/>
        <end position="173"/>
    </location>
    <ligand>
        <name>ATP</name>
        <dbReference type="ChEBI" id="CHEBI:30616"/>
    </ligand>
</feature>
<feature type="binding site" evidence="3">
    <location>
        <position position="189"/>
    </location>
    <ligand>
        <name>ATP</name>
        <dbReference type="ChEBI" id="CHEBI:30616"/>
    </ligand>
</feature>
<feature type="modified residue" description="Phosphoserine" evidence="2">
    <location>
        <position position="136"/>
    </location>
</feature>
<feature type="modified residue" description="Phosphoserine" evidence="13 14">
    <location>
        <position position="138"/>
    </location>
</feature>
<feature type="splice variant" id="VSP_008205" description="In isoform 2." evidence="10 11">
    <location>
        <begin position="1"/>
        <end position="180"/>
    </location>
</feature>
<feature type="mutagenesis site" description="Loss of function." evidence="7">
    <original>K</original>
    <variation>R</variation>
    <location>
        <position position="189"/>
    </location>
</feature>
<feature type="sequence conflict" description="In Ref. 4; AAB62179." evidence="12" ref="4">
    <original>E</original>
    <variation>Q</variation>
    <location>
        <position position="58"/>
    </location>
</feature>
<feature type="sequence conflict" description="In Ref. 4; AAB62179." evidence="12" ref="4">
    <original>D</original>
    <variation>N</variation>
    <location>
        <position position="141"/>
    </location>
</feature>
<feature type="sequence conflict" description="In Ref. 2; BAC25420." evidence="12" ref="2">
    <original>R</original>
    <variation>K</variation>
    <location>
        <position position="344"/>
    </location>
</feature>
<gene>
    <name type="primary">Clk4</name>
</gene>
<proteinExistence type="evidence at protein level"/>
<dbReference type="EC" id="2.7.12.1"/>
<dbReference type="EMBL" id="AF033566">
    <property type="protein sequence ID" value="AAB87510.1"/>
    <property type="molecule type" value="mRNA"/>
</dbReference>
<dbReference type="EMBL" id="AK013974">
    <property type="protein sequence ID" value="BAC25420.1"/>
    <property type="molecule type" value="mRNA"/>
</dbReference>
<dbReference type="EMBL" id="BC002220">
    <property type="protein sequence ID" value="AAH02220.1"/>
    <property type="molecule type" value="mRNA"/>
</dbReference>
<dbReference type="EMBL" id="BC012675">
    <property type="protein sequence ID" value="AAH12675.1"/>
    <property type="molecule type" value="mRNA"/>
</dbReference>
<dbReference type="EMBL" id="U94846">
    <property type="protein sequence ID" value="AAB62179.1"/>
    <property type="molecule type" value="mRNA"/>
</dbReference>
<dbReference type="CCDS" id="CCDS24651.1">
    <molecule id="O35493-1"/>
</dbReference>
<dbReference type="CCDS" id="CCDS78942.1">
    <molecule id="O35493-2"/>
</dbReference>
<dbReference type="RefSeq" id="NP_001291673.1">
    <molecule id="O35493-2"/>
    <property type="nucleotide sequence ID" value="NM_001304744.1"/>
</dbReference>
<dbReference type="RefSeq" id="NP_001349468.1">
    <molecule id="O35493-2"/>
    <property type="nucleotide sequence ID" value="NM_001362539.1"/>
</dbReference>
<dbReference type="RefSeq" id="NP_001349469.1">
    <molecule id="O35493-2"/>
    <property type="nucleotide sequence ID" value="NM_001362540.1"/>
</dbReference>
<dbReference type="RefSeq" id="NP_001349470.1">
    <molecule id="O35493-2"/>
    <property type="nucleotide sequence ID" value="NM_001362541.1"/>
</dbReference>
<dbReference type="RefSeq" id="NP_001417812.1">
    <molecule id="O35493-2"/>
    <property type="nucleotide sequence ID" value="NM_001430883.1"/>
</dbReference>
<dbReference type="RefSeq" id="NP_001417813.1">
    <molecule id="O35493-2"/>
    <property type="nucleotide sequence ID" value="NM_001430884.1"/>
</dbReference>
<dbReference type="RefSeq" id="NP_001417814.1">
    <molecule id="O35493-2"/>
    <property type="nucleotide sequence ID" value="NM_001430885.1"/>
</dbReference>
<dbReference type="RefSeq" id="NP_031740.1">
    <molecule id="O35493-1"/>
    <property type="nucleotide sequence ID" value="NM_007714.6"/>
</dbReference>
<dbReference type="RefSeq" id="XP_006532177.1">
    <property type="nucleotide sequence ID" value="XM_006532114.3"/>
</dbReference>
<dbReference type="RefSeq" id="XP_006532178.1">
    <property type="nucleotide sequence ID" value="XM_006532115.3"/>
</dbReference>
<dbReference type="RefSeq" id="XP_006532179.1">
    <property type="nucleotide sequence ID" value="XM_006532116.2"/>
</dbReference>
<dbReference type="RefSeq" id="XP_006532181.1">
    <molecule id="O35493-2"/>
    <property type="nucleotide sequence ID" value="XM_006532118.3"/>
</dbReference>
<dbReference type="RefSeq" id="XP_017169733.1">
    <property type="nucleotide sequence ID" value="XM_017314244.1"/>
</dbReference>
<dbReference type="SMR" id="O35493"/>
<dbReference type="FunCoup" id="O35493">
    <property type="interactions" value="2768"/>
</dbReference>
<dbReference type="IntAct" id="O35493">
    <property type="interactions" value="1"/>
</dbReference>
<dbReference type="MINT" id="O35493"/>
<dbReference type="STRING" id="10090.ENSMUSP00000090820"/>
<dbReference type="BindingDB" id="O35493"/>
<dbReference type="ChEMBL" id="CHEMBL1075283"/>
<dbReference type="GuidetoPHARMACOLOGY" id="1993"/>
<dbReference type="iPTMnet" id="O35493"/>
<dbReference type="PhosphoSitePlus" id="O35493"/>
<dbReference type="jPOST" id="O35493"/>
<dbReference type="PaxDb" id="10090-ENSMUSP00000090820"/>
<dbReference type="PeptideAtlas" id="O35493"/>
<dbReference type="ProteomicsDB" id="281686">
    <molecule id="O35493-1"/>
</dbReference>
<dbReference type="ProteomicsDB" id="281687">
    <molecule id="O35493-2"/>
</dbReference>
<dbReference type="Pumba" id="O35493"/>
<dbReference type="Antibodypedia" id="29447">
    <property type="antibodies" value="113 antibodies from 25 providers"/>
</dbReference>
<dbReference type="DNASU" id="12750"/>
<dbReference type="Ensembl" id="ENSMUST00000093132.13">
    <molecule id="O35493-1"/>
    <property type="protein sequence ID" value="ENSMUSP00000090820.7"/>
    <property type="gene ID" value="ENSMUSG00000020385.17"/>
</dbReference>
<dbReference type="Ensembl" id="ENSMUST00000109111.2">
    <molecule id="O35493-2"/>
    <property type="protein sequence ID" value="ENSMUSP00000104739.2"/>
    <property type="gene ID" value="ENSMUSG00000020385.17"/>
</dbReference>
<dbReference type="Ensembl" id="ENSMUST00000109113.8">
    <molecule id="O35493-2"/>
    <property type="protein sequence ID" value="ENSMUSP00000104741.2"/>
    <property type="gene ID" value="ENSMUSG00000020385.17"/>
</dbReference>
<dbReference type="GeneID" id="12750"/>
<dbReference type="KEGG" id="mmu:12750"/>
<dbReference type="UCSC" id="uc007itr.2">
    <molecule id="O35493-1"/>
    <property type="organism name" value="mouse"/>
</dbReference>
<dbReference type="AGR" id="MGI:1098551"/>
<dbReference type="CTD" id="57396"/>
<dbReference type="MGI" id="MGI:1098551">
    <property type="gene designation" value="Clk4"/>
</dbReference>
<dbReference type="VEuPathDB" id="HostDB:ENSMUSG00000020385"/>
<dbReference type="eggNOG" id="KOG0671">
    <property type="taxonomic scope" value="Eukaryota"/>
</dbReference>
<dbReference type="GeneTree" id="ENSGT00940000160245"/>
<dbReference type="HOGENOM" id="CLU_000288_5_16_1"/>
<dbReference type="InParanoid" id="O35493"/>
<dbReference type="OMA" id="NFRCVQM"/>
<dbReference type="OrthoDB" id="283111at2759"/>
<dbReference type="PhylomeDB" id="O35493"/>
<dbReference type="TreeFam" id="TF101041"/>
<dbReference type="BRENDA" id="2.7.12.1">
    <property type="organism ID" value="3474"/>
</dbReference>
<dbReference type="BioGRID-ORCS" id="12750">
    <property type="hits" value="1 hit in 67 CRISPR screens"/>
</dbReference>
<dbReference type="ChiTaRS" id="Clk4">
    <property type="organism name" value="mouse"/>
</dbReference>
<dbReference type="PRO" id="PR:O35493"/>
<dbReference type="Proteomes" id="UP000000589">
    <property type="component" value="Chromosome 11"/>
</dbReference>
<dbReference type="RNAct" id="O35493">
    <property type="molecule type" value="protein"/>
</dbReference>
<dbReference type="Bgee" id="ENSMUSG00000020385">
    <property type="expression patterns" value="Expressed in undifferentiated genital tubercle and 263 other cell types or tissues"/>
</dbReference>
<dbReference type="ExpressionAtlas" id="O35493">
    <property type="expression patterns" value="baseline and differential"/>
</dbReference>
<dbReference type="GO" id="GO:0005634">
    <property type="term" value="C:nucleus"/>
    <property type="evidence" value="ECO:0000314"/>
    <property type="project" value="MGI"/>
</dbReference>
<dbReference type="GO" id="GO:0005524">
    <property type="term" value="F:ATP binding"/>
    <property type="evidence" value="ECO:0007669"/>
    <property type="project" value="UniProtKB-KW"/>
</dbReference>
<dbReference type="GO" id="GO:0106310">
    <property type="term" value="F:protein serine kinase activity"/>
    <property type="evidence" value="ECO:0007669"/>
    <property type="project" value="RHEA"/>
</dbReference>
<dbReference type="GO" id="GO:0004674">
    <property type="term" value="F:protein serine/threonine kinase activity"/>
    <property type="evidence" value="ECO:0000314"/>
    <property type="project" value="UniProtKB"/>
</dbReference>
<dbReference type="GO" id="GO:0004712">
    <property type="term" value="F:protein serine/threonine/tyrosine kinase activity"/>
    <property type="evidence" value="ECO:0007669"/>
    <property type="project" value="UniProtKB-EC"/>
</dbReference>
<dbReference type="GO" id="GO:0004713">
    <property type="term" value="F:protein tyrosine kinase activity"/>
    <property type="evidence" value="ECO:0000314"/>
    <property type="project" value="MGI"/>
</dbReference>
<dbReference type="GO" id="GO:0043484">
    <property type="term" value="P:regulation of RNA splicing"/>
    <property type="evidence" value="ECO:0007669"/>
    <property type="project" value="Ensembl"/>
</dbReference>
<dbReference type="CDD" id="cd14213">
    <property type="entry name" value="PKc_CLK1_4"/>
    <property type="match status" value="1"/>
</dbReference>
<dbReference type="FunFam" id="3.30.200.20:FF:000061">
    <property type="entry name" value="Dual specificity protein kinase CLK2"/>
    <property type="match status" value="1"/>
</dbReference>
<dbReference type="FunFam" id="1.10.510.10:FF:000220">
    <property type="entry name" value="dual specificity protein kinase CLK4 isoform X1"/>
    <property type="match status" value="1"/>
</dbReference>
<dbReference type="Gene3D" id="3.30.200.20">
    <property type="entry name" value="Phosphorylase Kinase, domain 1"/>
    <property type="match status" value="1"/>
</dbReference>
<dbReference type="Gene3D" id="1.10.510.10">
    <property type="entry name" value="Transferase(Phosphotransferase) domain 1"/>
    <property type="match status" value="1"/>
</dbReference>
<dbReference type="InterPro" id="IPR051175">
    <property type="entry name" value="CLK_kinases"/>
</dbReference>
<dbReference type="InterPro" id="IPR011009">
    <property type="entry name" value="Kinase-like_dom_sf"/>
</dbReference>
<dbReference type="InterPro" id="IPR000719">
    <property type="entry name" value="Prot_kinase_dom"/>
</dbReference>
<dbReference type="InterPro" id="IPR017441">
    <property type="entry name" value="Protein_kinase_ATP_BS"/>
</dbReference>
<dbReference type="InterPro" id="IPR008271">
    <property type="entry name" value="Ser/Thr_kinase_AS"/>
</dbReference>
<dbReference type="PANTHER" id="PTHR45646:SF1">
    <property type="entry name" value="DUAL SPECIFICITY PROTEIN KINASE CLK4"/>
    <property type="match status" value="1"/>
</dbReference>
<dbReference type="PANTHER" id="PTHR45646">
    <property type="entry name" value="SERINE/THREONINE-PROTEIN KINASE DOA-RELATED"/>
    <property type="match status" value="1"/>
</dbReference>
<dbReference type="Pfam" id="PF00069">
    <property type="entry name" value="Pkinase"/>
    <property type="match status" value="1"/>
</dbReference>
<dbReference type="SMART" id="SM00220">
    <property type="entry name" value="S_TKc"/>
    <property type="match status" value="1"/>
</dbReference>
<dbReference type="SUPFAM" id="SSF56112">
    <property type="entry name" value="Protein kinase-like (PK-like)"/>
    <property type="match status" value="1"/>
</dbReference>
<dbReference type="PROSITE" id="PS00107">
    <property type="entry name" value="PROTEIN_KINASE_ATP"/>
    <property type="match status" value="1"/>
</dbReference>
<dbReference type="PROSITE" id="PS50011">
    <property type="entry name" value="PROTEIN_KINASE_DOM"/>
    <property type="match status" value="1"/>
</dbReference>
<dbReference type="PROSITE" id="PS00108">
    <property type="entry name" value="PROTEIN_KINASE_ST"/>
    <property type="match status" value="1"/>
</dbReference>
<sequence>MRHSKRTHCPDWDSRESWGHESYSGSHKRKRRSHSSTQENRHCKPHHQFKDSDCHYLEARCLNERDYRDRRYIDEYRNDYCEGYVPRHYHRDVESTYRIHCSKSSVRSRRSSPKRKRNRPCASHQSHSKSHRRKRSRSIEDDEEGHLICQSGDVLRARYEIVDTLGEGAFGKVVECIDHGMDGLHVAVKIVKNVGRYREAARSEIQVLEHLNSTDPNSVFRCVQMLEWFDHHGHVCIVFELLGLSTYDFIKENSFLPFQIDHIRQMAYQICQSINFLHHNKLTHTDLKPENILFVKSDYVVKYNSKMKRDERTLKNTDIKVVDFGSATYDDEHHSTLVSTRHYRAPEVILALGWSQPCDVWSIGCILIEYYLGFTVFQTHDSKEHLAMMERILGPIPAHMIQKTRKRKYFHHNQLDWDEHSSAGRYVRRRCKPLKEFMLCHDEEHEKLFDLVRRMLEYDPARRITLDEALQHPFFDLLKRK</sequence>
<organism>
    <name type="scientific">Mus musculus</name>
    <name type="common">Mouse</name>
    <dbReference type="NCBI Taxonomy" id="10090"/>
    <lineage>
        <taxon>Eukaryota</taxon>
        <taxon>Metazoa</taxon>
        <taxon>Chordata</taxon>
        <taxon>Craniata</taxon>
        <taxon>Vertebrata</taxon>
        <taxon>Euteleostomi</taxon>
        <taxon>Mammalia</taxon>
        <taxon>Eutheria</taxon>
        <taxon>Euarchontoglires</taxon>
        <taxon>Glires</taxon>
        <taxon>Rodentia</taxon>
        <taxon>Myomorpha</taxon>
        <taxon>Muroidea</taxon>
        <taxon>Muridae</taxon>
        <taxon>Murinae</taxon>
        <taxon>Mus</taxon>
        <taxon>Mus</taxon>
    </lineage>
</organism>
<name>CLK4_MOUSE</name>
<accession>O35493</accession>
<accession>O35721</accession>
<accession>Q8CEU9</accession>
<accession>Q99LU6</accession>
<keyword id="KW-0025">Alternative splicing</keyword>
<keyword id="KW-0067">ATP-binding</keyword>
<keyword id="KW-0418">Kinase</keyword>
<keyword id="KW-0547">Nucleotide-binding</keyword>
<keyword id="KW-0539">Nucleus</keyword>
<keyword id="KW-0597">Phosphoprotein</keyword>
<keyword id="KW-1185">Reference proteome</keyword>
<keyword id="KW-0723">Serine/threonine-protein kinase</keyword>
<keyword id="KW-0808">Transferase</keyword>
<keyword id="KW-0829">Tyrosine-protein kinase</keyword>
<comment type="function">
    <text evidence="6 9">Dual specificity kinase acting on both serine/threonine and tyrosine-containing substrates. Phosphorylates serine- and arginine-rich (SR) proteins of the spliceosomal complex and may be a constituent of a network of regulatory mechanisms that enable SR proteins to control RNA splicing. Phosphorylates SRSF1 and SRSF3. Required for the regulation of alternative splicing of MAPT/TAU. Regulates the alternative splicing of tissue factor (F3) pre-mRNA in endothelial cells.</text>
</comment>
<comment type="catalytic activity">
    <reaction>
        <text>L-seryl-[protein] + ATP = O-phospho-L-seryl-[protein] + ADP + H(+)</text>
        <dbReference type="Rhea" id="RHEA:17989"/>
        <dbReference type="Rhea" id="RHEA-COMP:9863"/>
        <dbReference type="Rhea" id="RHEA-COMP:11604"/>
        <dbReference type="ChEBI" id="CHEBI:15378"/>
        <dbReference type="ChEBI" id="CHEBI:29999"/>
        <dbReference type="ChEBI" id="CHEBI:30616"/>
        <dbReference type="ChEBI" id="CHEBI:83421"/>
        <dbReference type="ChEBI" id="CHEBI:456216"/>
        <dbReference type="EC" id="2.7.12.1"/>
    </reaction>
</comment>
<comment type="catalytic activity">
    <reaction>
        <text>L-threonyl-[protein] + ATP = O-phospho-L-threonyl-[protein] + ADP + H(+)</text>
        <dbReference type="Rhea" id="RHEA:46608"/>
        <dbReference type="Rhea" id="RHEA-COMP:11060"/>
        <dbReference type="Rhea" id="RHEA-COMP:11605"/>
        <dbReference type="ChEBI" id="CHEBI:15378"/>
        <dbReference type="ChEBI" id="CHEBI:30013"/>
        <dbReference type="ChEBI" id="CHEBI:30616"/>
        <dbReference type="ChEBI" id="CHEBI:61977"/>
        <dbReference type="ChEBI" id="CHEBI:456216"/>
        <dbReference type="EC" id="2.7.12.1"/>
    </reaction>
</comment>
<comment type="catalytic activity">
    <reaction>
        <text>L-tyrosyl-[protein] + ATP = O-phospho-L-tyrosyl-[protein] + ADP + H(+)</text>
        <dbReference type="Rhea" id="RHEA:10596"/>
        <dbReference type="Rhea" id="RHEA-COMP:10136"/>
        <dbReference type="Rhea" id="RHEA-COMP:20101"/>
        <dbReference type="ChEBI" id="CHEBI:15378"/>
        <dbReference type="ChEBI" id="CHEBI:30616"/>
        <dbReference type="ChEBI" id="CHEBI:46858"/>
        <dbReference type="ChEBI" id="CHEBI:61978"/>
        <dbReference type="ChEBI" id="CHEBI:456216"/>
        <dbReference type="EC" id="2.7.12.1"/>
    </reaction>
</comment>
<comment type="activity regulation">
    <text evidence="8">TG003 inhibits its kinase activity and affects the regulation of alternative splicing mediated by phosphorylation of SR proteins.</text>
</comment>
<comment type="subunit">
    <text evidence="1">Interacts with UBL5.</text>
</comment>
<comment type="subcellular location">
    <subcellularLocation>
        <location evidence="9">Nucleus</location>
    </subcellularLocation>
</comment>
<comment type="alternative products">
    <event type="alternative splicing"/>
    <isoform>
        <id>O35493-1</id>
        <name>1</name>
        <sequence type="displayed"/>
    </isoform>
    <isoform>
        <id>O35493-2</id>
        <name>2</name>
        <sequence type="described" ref="VSP_008205"/>
    </isoform>
</comment>
<comment type="tissue specificity">
    <text evidence="7">Expressed in the hippocampus, the cerebellum and the olfactory bulb.</text>
</comment>
<comment type="PTM">
    <text evidence="9">Autophosphorylates on all three types of residues.</text>
</comment>
<comment type="similarity">
    <text evidence="12">Belongs to the protein kinase superfamily. CMGC Ser/Thr protein kinase family. Lammer subfamily.</text>
</comment>
<reference key="1">
    <citation type="journal article" date="1997" name="Biochem. J.">
        <title>Characterization and comparison of four serine- and arginine-rich (SR) protein kinases.</title>
        <authorList>
            <person name="Nayler O."/>
            <person name="Stamm S."/>
            <person name="Ullrich A."/>
        </authorList>
    </citation>
    <scope>NUCLEOTIDE SEQUENCE [MRNA] (ISOFORM 1)</scope>
    <scope>FUNCTION</scope>
    <scope>PHOSPHORYLATION</scope>
    <scope>SUBCELLULAR LOCATION</scope>
</reference>
<reference key="2">
    <citation type="journal article" date="2005" name="Science">
        <title>The transcriptional landscape of the mammalian genome.</title>
        <authorList>
            <person name="Carninci P."/>
            <person name="Kasukawa T."/>
            <person name="Katayama S."/>
            <person name="Gough J."/>
            <person name="Frith M.C."/>
            <person name="Maeda N."/>
            <person name="Oyama R."/>
            <person name="Ravasi T."/>
            <person name="Lenhard B."/>
            <person name="Wells C."/>
            <person name="Kodzius R."/>
            <person name="Shimokawa K."/>
            <person name="Bajic V.B."/>
            <person name="Brenner S.E."/>
            <person name="Batalov S."/>
            <person name="Forrest A.R."/>
            <person name="Zavolan M."/>
            <person name="Davis M.J."/>
            <person name="Wilming L.G."/>
            <person name="Aidinis V."/>
            <person name="Allen J.E."/>
            <person name="Ambesi-Impiombato A."/>
            <person name="Apweiler R."/>
            <person name="Aturaliya R.N."/>
            <person name="Bailey T.L."/>
            <person name="Bansal M."/>
            <person name="Baxter L."/>
            <person name="Beisel K.W."/>
            <person name="Bersano T."/>
            <person name="Bono H."/>
            <person name="Chalk A.M."/>
            <person name="Chiu K.P."/>
            <person name="Choudhary V."/>
            <person name="Christoffels A."/>
            <person name="Clutterbuck D.R."/>
            <person name="Crowe M.L."/>
            <person name="Dalla E."/>
            <person name="Dalrymple B.P."/>
            <person name="de Bono B."/>
            <person name="Della Gatta G."/>
            <person name="di Bernardo D."/>
            <person name="Down T."/>
            <person name="Engstrom P."/>
            <person name="Fagiolini M."/>
            <person name="Faulkner G."/>
            <person name="Fletcher C.F."/>
            <person name="Fukushima T."/>
            <person name="Furuno M."/>
            <person name="Futaki S."/>
            <person name="Gariboldi M."/>
            <person name="Georgii-Hemming P."/>
            <person name="Gingeras T.R."/>
            <person name="Gojobori T."/>
            <person name="Green R.E."/>
            <person name="Gustincich S."/>
            <person name="Harbers M."/>
            <person name="Hayashi Y."/>
            <person name="Hensch T.K."/>
            <person name="Hirokawa N."/>
            <person name="Hill D."/>
            <person name="Huminiecki L."/>
            <person name="Iacono M."/>
            <person name="Ikeo K."/>
            <person name="Iwama A."/>
            <person name="Ishikawa T."/>
            <person name="Jakt M."/>
            <person name="Kanapin A."/>
            <person name="Katoh M."/>
            <person name="Kawasawa Y."/>
            <person name="Kelso J."/>
            <person name="Kitamura H."/>
            <person name="Kitano H."/>
            <person name="Kollias G."/>
            <person name="Krishnan S.P."/>
            <person name="Kruger A."/>
            <person name="Kummerfeld S.K."/>
            <person name="Kurochkin I.V."/>
            <person name="Lareau L.F."/>
            <person name="Lazarevic D."/>
            <person name="Lipovich L."/>
            <person name="Liu J."/>
            <person name="Liuni S."/>
            <person name="McWilliam S."/>
            <person name="Madan Babu M."/>
            <person name="Madera M."/>
            <person name="Marchionni L."/>
            <person name="Matsuda H."/>
            <person name="Matsuzawa S."/>
            <person name="Miki H."/>
            <person name="Mignone F."/>
            <person name="Miyake S."/>
            <person name="Morris K."/>
            <person name="Mottagui-Tabar S."/>
            <person name="Mulder N."/>
            <person name="Nakano N."/>
            <person name="Nakauchi H."/>
            <person name="Ng P."/>
            <person name="Nilsson R."/>
            <person name="Nishiguchi S."/>
            <person name="Nishikawa S."/>
            <person name="Nori F."/>
            <person name="Ohara O."/>
            <person name="Okazaki Y."/>
            <person name="Orlando V."/>
            <person name="Pang K.C."/>
            <person name="Pavan W.J."/>
            <person name="Pavesi G."/>
            <person name="Pesole G."/>
            <person name="Petrovsky N."/>
            <person name="Piazza S."/>
            <person name="Reed J."/>
            <person name="Reid J.F."/>
            <person name="Ring B.Z."/>
            <person name="Ringwald M."/>
            <person name="Rost B."/>
            <person name="Ruan Y."/>
            <person name="Salzberg S.L."/>
            <person name="Sandelin A."/>
            <person name="Schneider C."/>
            <person name="Schoenbach C."/>
            <person name="Sekiguchi K."/>
            <person name="Semple C.A."/>
            <person name="Seno S."/>
            <person name="Sessa L."/>
            <person name="Sheng Y."/>
            <person name="Shibata Y."/>
            <person name="Shimada H."/>
            <person name="Shimada K."/>
            <person name="Silva D."/>
            <person name="Sinclair B."/>
            <person name="Sperling S."/>
            <person name="Stupka E."/>
            <person name="Sugiura K."/>
            <person name="Sultana R."/>
            <person name="Takenaka Y."/>
            <person name="Taki K."/>
            <person name="Tammoja K."/>
            <person name="Tan S.L."/>
            <person name="Tang S."/>
            <person name="Taylor M.S."/>
            <person name="Tegner J."/>
            <person name="Teichmann S.A."/>
            <person name="Ueda H.R."/>
            <person name="van Nimwegen E."/>
            <person name="Verardo R."/>
            <person name="Wei C.L."/>
            <person name="Yagi K."/>
            <person name="Yamanishi H."/>
            <person name="Zabarovsky E."/>
            <person name="Zhu S."/>
            <person name="Zimmer A."/>
            <person name="Hide W."/>
            <person name="Bult C."/>
            <person name="Grimmond S.M."/>
            <person name="Teasdale R.D."/>
            <person name="Liu E.T."/>
            <person name="Brusic V."/>
            <person name="Quackenbush J."/>
            <person name="Wahlestedt C."/>
            <person name="Mattick J.S."/>
            <person name="Hume D.A."/>
            <person name="Kai C."/>
            <person name="Sasaki D."/>
            <person name="Tomaru Y."/>
            <person name="Fukuda S."/>
            <person name="Kanamori-Katayama M."/>
            <person name="Suzuki M."/>
            <person name="Aoki J."/>
            <person name="Arakawa T."/>
            <person name="Iida J."/>
            <person name="Imamura K."/>
            <person name="Itoh M."/>
            <person name="Kato T."/>
            <person name="Kawaji H."/>
            <person name="Kawagashira N."/>
            <person name="Kawashima T."/>
            <person name="Kojima M."/>
            <person name="Kondo S."/>
            <person name="Konno H."/>
            <person name="Nakano K."/>
            <person name="Ninomiya N."/>
            <person name="Nishio T."/>
            <person name="Okada M."/>
            <person name="Plessy C."/>
            <person name="Shibata K."/>
            <person name="Shiraki T."/>
            <person name="Suzuki S."/>
            <person name="Tagami M."/>
            <person name="Waki K."/>
            <person name="Watahiki A."/>
            <person name="Okamura-Oho Y."/>
            <person name="Suzuki H."/>
            <person name="Kawai J."/>
            <person name="Hayashizaki Y."/>
        </authorList>
    </citation>
    <scope>NUCLEOTIDE SEQUENCE [LARGE SCALE MRNA] (ISOFORM 2)</scope>
    <source>
        <strain>C57BL/6J</strain>
        <tissue>Head</tissue>
    </source>
</reference>
<reference key="3">
    <citation type="journal article" date="2004" name="Genome Res.">
        <title>The status, quality, and expansion of the NIH full-length cDNA project: the Mammalian Gene Collection (MGC).</title>
        <authorList>
            <consortium name="The MGC Project Team"/>
        </authorList>
    </citation>
    <scope>NUCLEOTIDE SEQUENCE [LARGE SCALE MRNA] (ISOFORMS 1 AND 2)</scope>
    <source>
        <strain>Czech II</strain>
        <tissue>Mammary tumor</tissue>
    </source>
</reference>
<reference key="4">
    <citation type="journal article" date="1997" name="Genomics">
        <title>Construction of a 3-Mb contig and partial transcript map of the central region of mouse chromosome 11.</title>
        <authorList>
            <person name="Watkins-Chow D.E."/>
            <person name="Douglas K.R."/>
            <person name="Buckwalter M.S."/>
            <person name="Probst F.J."/>
            <person name="Camper S.A."/>
        </authorList>
    </citation>
    <scope>NUCLEOTIDE SEQUENCE [MRNA] OF 1-219</scope>
</reference>
<reference key="5">
    <citation type="journal article" date="2001" name="Mol. Cell. Neurosci.">
        <title>Regulation of alternative splicing of human tau exon 10 by phosphorylation of splicing factors.</title>
        <authorList>
            <person name="Hartmann A.M."/>
            <person name="Rujescu D."/>
            <person name="Giannakouros T."/>
            <person name="Nikolakaki E."/>
            <person name="Goedert M."/>
            <person name="Mandelkow E.-M."/>
            <person name="Gao Q.S."/>
            <person name="Andreadis A."/>
            <person name="Stamm S."/>
        </authorList>
    </citation>
    <scope>FUNCTION</scope>
</reference>
<reference key="6">
    <citation type="journal article" date="2002" name="J. Biol. Chem.">
        <title>Novel SR-rich-related protein Clasp specifically interacts with inactivated Clk4 and induces the exon EB inclusion of Clk.</title>
        <authorList>
            <person name="Katsu R."/>
            <person name="Onogi H."/>
            <person name="Wada K."/>
            <person name="Kawaguchi Y."/>
            <person name="Hagiwara M."/>
        </authorList>
    </citation>
    <scope>TISSUE SPECIFICITY</scope>
    <scope>MUTAGENESIS OF LYS-189</scope>
</reference>
<reference key="7">
    <citation type="journal article" date="2004" name="J. Biol. Chem.">
        <title>Manipulation of alternative splicing by a newly developed inhibitor of Clks.</title>
        <authorList>
            <person name="Muraki M."/>
            <person name="Ohkawara B."/>
            <person name="Hosoya T."/>
            <person name="Onogi H."/>
            <person name="Koizumi J."/>
            <person name="Koizumi T."/>
            <person name="Sumi K."/>
            <person name="Yomoda J."/>
            <person name="Murray M.V."/>
            <person name="Kimura H."/>
            <person name="Furuichi K."/>
            <person name="Shibuya H."/>
            <person name="Krainer A.R."/>
            <person name="Suzuki M."/>
            <person name="Hagiwara M."/>
        </authorList>
    </citation>
    <scope>ACTIVITY REGULATION</scope>
</reference>
<reference key="8">
    <citation type="journal article" date="2007" name="Proc. Natl. Acad. Sci. U.S.A.">
        <title>Large-scale phosphorylation analysis of mouse liver.</title>
        <authorList>
            <person name="Villen J."/>
            <person name="Beausoleil S.A."/>
            <person name="Gerber S.A."/>
            <person name="Gygi S.P."/>
        </authorList>
    </citation>
    <scope>PHOSPHORYLATION [LARGE SCALE ANALYSIS] AT SER-138</scope>
    <scope>IDENTIFICATION BY MASS SPECTROMETRY [LARGE SCALE ANALYSIS]</scope>
    <source>
        <tissue>Liver</tissue>
    </source>
</reference>
<reference key="9">
    <citation type="journal article" date="2010" name="Cell">
        <title>A tissue-specific atlas of mouse protein phosphorylation and expression.</title>
        <authorList>
            <person name="Huttlin E.L."/>
            <person name="Jedrychowski M.P."/>
            <person name="Elias J.E."/>
            <person name="Goswami T."/>
            <person name="Rad R."/>
            <person name="Beausoleil S.A."/>
            <person name="Villen J."/>
            <person name="Haas W."/>
            <person name="Sowa M.E."/>
            <person name="Gygi S.P."/>
        </authorList>
    </citation>
    <scope>PHOSPHORYLATION [LARGE SCALE ANALYSIS] AT SER-138</scope>
    <scope>IDENTIFICATION BY MASS SPECTROMETRY [LARGE SCALE ANALYSIS]</scope>
    <source>
        <tissue>Kidney</tissue>
        <tissue>Liver</tissue>
        <tissue>Lung</tissue>
        <tissue>Pancreas</tissue>
        <tissue>Spleen</tissue>
        <tissue>Testis</tissue>
    </source>
</reference>